<accession>Q5YW77</accession>
<evidence type="ECO:0000250" key="1"/>
<evidence type="ECO:0000255" key="2"/>
<evidence type="ECO:0000305" key="3"/>
<reference key="1">
    <citation type="journal article" date="2004" name="Proc. Natl. Acad. Sci. U.S.A.">
        <title>The complete genomic sequence of Nocardia farcinica IFM 10152.</title>
        <authorList>
            <person name="Ishikawa J."/>
            <person name="Yamashita A."/>
            <person name="Mikami Y."/>
            <person name="Hoshino Y."/>
            <person name="Kurita H."/>
            <person name="Hotta K."/>
            <person name="Shiba T."/>
            <person name="Hattori M."/>
        </authorList>
    </citation>
    <scope>NUCLEOTIDE SEQUENCE [LARGE SCALE GENOMIC DNA]</scope>
    <source>
        <strain>IFM 10152</strain>
    </source>
</reference>
<dbReference type="EC" id="2.6.1.76"/>
<dbReference type="EMBL" id="AP006618">
    <property type="protein sequence ID" value="BAD57564.1"/>
    <property type="molecule type" value="Genomic_DNA"/>
</dbReference>
<dbReference type="RefSeq" id="WP_011209249.1">
    <property type="nucleotide sequence ID" value="NC_006361.1"/>
</dbReference>
<dbReference type="SMR" id="Q5YW77"/>
<dbReference type="STRING" id="247156.NFA_27170"/>
<dbReference type="GeneID" id="61133456"/>
<dbReference type="KEGG" id="nfa:NFA_27170"/>
<dbReference type="eggNOG" id="COG0160">
    <property type="taxonomic scope" value="Bacteria"/>
</dbReference>
<dbReference type="HOGENOM" id="CLU_016922_10_0_11"/>
<dbReference type="OrthoDB" id="9801052at2"/>
<dbReference type="UniPathway" id="UPA00067">
    <property type="reaction ID" value="UER00121"/>
</dbReference>
<dbReference type="Proteomes" id="UP000006820">
    <property type="component" value="Chromosome"/>
</dbReference>
<dbReference type="GO" id="GO:0045303">
    <property type="term" value="F:diaminobutyrate-2-oxoglutarate transaminase activity"/>
    <property type="evidence" value="ECO:0007669"/>
    <property type="project" value="UniProtKB-EC"/>
</dbReference>
<dbReference type="GO" id="GO:0047307">
    <property type="term" value="F:diaminobutyrate-pyruvate transaminase activity"/>
    <property type="evidence" value="ECO:0007669"/>
    <property type="project" value="InterPro"/>
</dbReference>
<dbReference type="GO" id="GO:0030170">
    <property type="term" value="F:pyridoxal phosphate binding"/>
    <property type="evidence" value="ECO:0007669"/>
    <property type="project" value="InterPro"/>
</dbReference>
<dbReference type="GO" id="GO:0019491">
    <property type="term" value="P:ectoine biosynthetic process"/>
    <property type="evidence" value="ECO:0007669"/>
    <property type="project" value="UniProtKB-UniPathway"/>
</dbReference>
<dbReference type="CDD" id="cd00610">
    <property type="entry name" value="OAT_like"/>
    <property type="match status" value="1"/>
</dbReference>
<dbReference type="Gene3D" id="3.90.1150.10">
    <property type="entry name" value="Aspartate Aminotransferase, domain 1"/>
    <property type="match status" value="1"/>
</dbReference>
<dbReference type="Gene3D" id="3.40.640.10">
    <property type="entry name" value="Type I PLP-dependent aspartate aminotransferase-like (Major domain)"/>
    <property type="match status" value="1"/>
</dbReference>
<dbReference type="InterPro" id="IPR005814">
    <property type="entry name" value="Aminotrans_3"/>
</dbReference>
<dbReference type="InterPro" id="IPR049704">
    <property type="entry name" value="Aminotrans_3_PPA_site"/>
</dbReference>
<dbReference type="InterPro" id="IPR004637">
    <property type="entry name" value="Dat"/>
</dbReference>
<dbReference type="InterPro" id="IPR012773">
    <property type="entry name" value="Ectoine_EctB"/>
</dbReference>
<dbReference type="InterPro" id="IPR015424">
    <property type="entry name" value="PyrdxlP-dep_Trfase"/>
</dbReference>
<dbReference type="InterPro" id="IPR015421">
    <property type="entry name" value="PyrdxlP-dep_Trfase_major"/>
</dbReference>
<dbReference type="InterPro" id="IPR015422">
    <property type="entry name" value="PyrdxlP-dep_Trfase_small"/>
</dbReference>
<dbReference type="NCBIfam" id="TIGR00709">
    <property type="entry name" value="dat"/>
    <property type="match status" value="1"/>
</dbReference>
<dbReference type="NCBIfam" id="TIGR02407">
    <property type="entry name" value="ectoine_ectB"/>
    <property type="match status" value="1"/>
</dbReference>
<dbReference type="NCBIfam" id="NF006733">
    <property type="entry name" value="PRK09264.1"/>
    <property type="match status" value="1"/>
</dbReference>
<dbReference type="PANTHER" id="PTHR43552">
    <property type="entry name" value="DIAMINOBUTYRATE--2-OXOGLUTARATE AMINOTRANSFERASE"/>
    <property type="match status" value="1"/>
</dbReference>
<dbReference type="PANTHER" id="PTHR43552:SF2">
    <property type="entry name" value="DIAMINOBUTYRATE--2-OXOGLUTARATE TRANSAMINASE"/>
    <property type="match status" value="1"/>
</dbReference>
<dbReference type="Pfam" id="PF00202">
    <property type="entry name" value="Aminotran_3"/>
    <property type="match status" value="1"/>
</dbReference>
<dbReference type="PIRSF" id="PIRSF000521">
    <property type="entry name" value="Transaminase_4ab_Lys_Orn"/>
    <property type="match status" value="1"/>
</dbReference>
<dbReference type="SUPFAM" id="SSF53383">
    <property type="entry name" value="PLP-dependent transferases"/>
    <property type="match status" value="1"/>
</dbReference>
<dbReference type="PROSITE" id="PS00600">
    <property type="entry name" value="AA_TRANSFER_CLASS_3"/>
    <property type="match status" value="1"/>
</dbReference>
<gene>
    <name type="primary">ectB</name>
    <name type="ordered locus">NFA_27170</name>
</gene>
<keyword id="KW-0032">Aminotransferase</keyword>
<keyword id="KW-0663">Pyridoxal phosphate</keyword>
<keyword id="KW-1185">Reference proteome</keyword>
<keyword id="KW-0808">Transferase</keyword>
<organism>
    <name type="scientific">Nocardia farcinica (strain IFM 10152)</name>
    <dbReference type="NCBI Taxonomy" id="247156"/>
    <lineage>
        <taxon>Bacteria</taxon>
        <taxon>Bacillati</taxon>
        <taxon>Actinomycetota</taxon>
        <taxon>Actinomycetes</taxon>
        <taxon>Mycobacteriales</taxon>
        <taxon>Nocardiaceae</taxon>
        <taxon>Nocardia</taxon>
    </lineage>
</organism>
<comment type="function">
    <text evidence="1">Catalyzes reversively the conversion of L-aspartate beta-semialdehyde (ASA) to L-2,4-diaminobutyrate (DABA) by transamination with L-glutamate.</text>
</comment>
<comment type="catalytic activity">
    <reaction>
        <text>L-2,4-diaminobutanoate + 2-oxoglutarate = L-aspartate 4-semialdehyde + L-glutamate</text>
        <dbReference type="Rhea" id="RHEA:11160"/>
        <dbReference type="ChEBI" id="CHEBI:16810"/>
        <dbReference type="ChEBI" id="CHEBI:29985"/>
        <dbReference type="ChEBI" id="CHEBI:58761"/>
        <dbReference type="ChEBI" id="CHEBI:537519"/>
        <dbReference type="EC" id="2.6.1.76"/>
    </reaction>
</comment>
<comment type="cofactor">
    <cofactor evidence="1">
        <name>pyridoxal 5'-phosphate</name>
        <dbReference type="ChEBI" id="CHEBI:597326"/>
    </cofactor>
</comment>
<comment type="pathway">
    <text>Amine and polyamine biosynthesis; ectoine biosynthesis; L-ectoine from L-aspartate 4-semialdehyde: step 1/3.</text>
</comment>
<comment type="similarity">
    <text evidence="3">Belongs to the class-III pyridoxal-phosphate-dependent aminotransferase family.</text>
</comment>
<protein>
    <recommendedName>
        <fullName>Diaminobutyrate--2-oxoglutarate transaminase</fullName>
        <ecNumber>2.6.1.76</ecNumber>
    </recommendedName>
    <alternativeName>
        <fullName>DABA aminotransferase</fullName>
    </alternativeName>
    <alternativeName>
        <fullName>Diaminobutyrate--2-oxoglutarate aminotransferase</fullName>
    </alternativeName>
    <alternativeName>
        <fullName>L-2,4-diaminobutyric acid transaminase</fullName>
    </alternativeName>
</protein>
<sequence length="436" mass="46775">MITAETNVFESLESNVRGYCRNWPTVFTTAKGAWLQDEDGKDYLDFFAGAGALNYGHNNPVLKQPLIDYIASDGITHGLDMSTAAKRKLLETLRDTVFAPRGLDYKVQFPGPTGANAVEAALKLARKVTGRETVLSFTNAFHGMTLGALSVTGNAAKRAGAGVPLVHAAHMPYDGYFDNTTADFQWMERVLDDTSSGFDRPAAVIVETVQGEGGINVARVEWLQHLAQLCAEREILLIVDDVQMGCGRTGPFFSFEVAGITPDIVTLSKSIGGYGLPLALVLFKPELDQWAPGEHNGTFRGNNPAFVTAQVALETFWSDGALEAATKAKGEKVATELATVAGHFPGLSTRGRGLVHGIAFEDPSQAGKVCQVAFERGLLVETSGSSDEVVKLLPPLTITDDELDQGLQILTGAIDTVCTGWGRLHHRAPAEGGERR</sequence>
<name>ECTB_NOCFA</name>
<feature type="chain" id="PRO_0000120525" description="Diaminobutyrate--2-oxoglutarate transaminase">
    <location>
        <begin position="1"/>
        <end position="436"/>
    </location>
</feature>
<feature type="modified residue" description="N6-(pyridoxal phosphate)lysine" evidence="2">
    <location>
        <position position="269"/>
    </location>
</feature>
<proteinExistence type="inferred from homology"/>